<comment type="function">
    <text evidence="2">Forms a water-specific channel that provides the plasma membranes of renal collecting duct with high permeability to water, thereby permitting water to move in the direction of an osmotic gradient. Plays an essential role in renal water homeostasis. Could also be permeable to glycerol.</text>
</comment>
<comment type="catalytic activity">
    <reaction evidence="2">
        <text>H2O(in) = H2O(out)</text>
        <dbReference type="Rhea" id="RHEA:29667"/>
        <dbReference type="ChEBI" id="CHEBI:15377"/>
    </reaction>
</comment>
<comment type="catalytic activity">
    <reaction evidence="2">
        <text>glycerol(in) = glycerol(out)</text>
        <dbReference type="Rhea" id="RHEA:29675"/>
        <dbReference type="ChEBI" id="CHEBI:17754"/>
    </reaction>
</comment>
<comment type="subunit">
    <text evidence="2">Homotetramer.</text>
</comment>
<comment type="subcellular location">
    <subcellularLocation>
        <location evidence="2">Apical cell membrane</location>
        <topology evidence="2">Multi-pass membrane protein</topology>
    </subcellularLocation>
    <subcellularLocation>
        <location evidence="1">Basolateral cell membrane</location>
        <topology evidence="2">Multi-pass membrane protein</topology>
    </subcellularLocation>
    <subcellularLocation>
        <location evidence="2">Cell membrane</location>
        <topology evidence="2">Multi-pass membrane protein</topology>
    </subcellularLocation>
    <subcellularLocation>
        <location evidence="2">Cytoplasmic vesicle membrane</location>
        <topology evidence="2">Multi-pass membrane protein</topology>
    </subcellularLocation>
    <subcellularLocation>
        <location evidence="2">Golgi apparatus</location>
        <location evidence="2">trans-Golgi network membrane</location>
        <topology evidence="2">Multi-pass membrane protein</topology>
    </subcellularLocation>
    <text evidence="2">Shuttles from vesicles to the apical membrane. Vasopressin-regulated phosphorylation is required for translocation to the apical cell membrane. PLEKHA8/FAPP2 is required to transport AQP2 from the TGN to sites where AQP2 is phosphorylated.</text>
</comment>
<comment type="domain">
    <text evidence="2">Aquaporins contain two tandem repeats each containing three membrane-spanning domains and a pore-forming loop with the signature motif Asn-Pro-Ala (NPA).</text>
</comment>
<comment type="PTM">
    <text evidence="2">Serine phosphorylation is necessary and sufficient for expression at the apical membrane. Endocytosis is not phosphorylation-dependent.</text>
</comment>
<comment type="PTM">
    <text evidence="2">N-glycosylated.</text>
</comment>
<comment type="similarity">
    <text evidence="3">Belongs to the MIP/aquaporin (TC 1.A.8) family.</text>
</comment>
<name>AQP2_AMBHO</name>
<sequence>SIAFSRAVFSEFLATLLFVFFGLGSALNWPQALPSVLQIAMAFGLAIGTLVQTLGHISGAHINPAVTVACLVGCHVSFLRATFYVAAQLLGAVAGAALLHELTPPDIRG</sequence>
<proteinExistence type="inferred from homology"/>
<protein>
    <recommendedName>
        <fullName evidence="3">Aquaporin-2</fullName>
        <shortName>AQP-2</shortName>
    </recommendedName>
    <alternativeName>
        <fullName>ADH water channel</fullName>
    </alternativeName>
    <alternativeName>
        <fullName>Aquaporin-CD</fullName>
        <shortName>AQP-CD</shortName>
    </alternativeName>
    <alternativeName>
        <fullName>Collecting duct water channel protein</fullName>
    </alternativeName>
    <alternativeName>
        <fullName>WCH-CD</fullName>
    </alternativeName>
    <alternativeName>
        <fullName>Water channel protein for renal collecting duct</fullName>
    </alternativeName>
</protein>
<organism>
    <name type="scientific">Amblysomus hottentotus</name>
    <name type="common">Hottentot golden mole</name>
    <dbReference type="NCBI Taxonomy" id="9391"/>
    <lineage>
        <taxon>Eukaryota</taxon>
        <taxon>Metazoa</taxon>
        <taxon>Chordata</taxon>
        <taxon>Craniata</taxon>
        <taxon>Vertebrata</taxon>
        <taxon>Euteleostomi</taxon>
        <taxon>Mammalia</taxon>
        <taxon>Eutheria</taxon>
        <taxon>Afrotheria</taxon>
        <taxon>Chrysochloridae</taxon>
        <taxon>Amblysominae</taxon>
        <taxon>Amblysomus</taxon>
    </lineage>
</organism>
<keyword id="KW-1003">Cell membrane</keyword>
<keyword id="KW-0968">Cytoplasmic vesicle</keyword>
<keyword id="KW-0325">Glycoprotein</keyword>
<keyword id="KW-0333">Golgi apparatus</keyword>
<keyword id="KW-0472">Membrane</keyword>
<keyword id="KW-0597">Phosphoprotein</keyword>
<keyword id="KW-0812">Transmembrane</keyword>
<keyword id="KW-1133">Transmembrane helix</keyword>
<keyword id="KW-0813">Transport</keyword>
<dbReference type="EMBL" id="Y15952">
    <property type="protein sequence ID" value="CAA75905.1"/>
    <property type="molecule type" value="Genomic_DNA"/>
</dbReference>
<dbReference type="SMR" id="O77697"/>
<dbReference type="GO" id="GO:0016324">
    <property type="term" value="C:apical plasma membrane"/>
    <property type="evidence" value="ECO:0000250"/>
    <property type="project" value="UniProtKB"/>
</dbReference>
<dbReference type="GO" id="GO:0016323">
    <property type="term" value="C:basolateral plasma membrane"/>
    <property type="evidence" value="ECO:0007669"/>
    <property type="project" value="UniProtKB-SubCell"/>
</dbReference>
<dbReference type="GO" id="GO:0030659">
    <property type="term" value="C:cytoplasmic vesicle membrane"/>
    <property type="evidence" value="ECO:0007669"/>
    <property type="project" value="UniProtKB-SubCell"/>
</dbReference>
<dbReference type="GO" id="GO:0005794">
    <property type="term" value="C:Golgi apparatus"/>
    <property type="evidence" value="ECO:0007669"/>
    <property type="project" value="UniProtKB-SubCell"/>
</dbReference>
<dbReference type="GO" id="GO:0005886">
    <property type="term" value="C:plasma membrane"/>
    <property type="evidence" value="ECO:0000250"/>
    <property type="project" value="UniProtKB"/>
</dbReference>
<dbReference type="GO" id="GO:0015250">
    <property type="term" value="F:water channel activity"/>
    <property type="evidence" value="ECO:0000250"/>
    <property type="project" value="UniProtKB"/>
</dbReference>
<dbReference type="GO" id="GO:0051289">
    <property type="term" value="P:protein homotetramerization"/>
    <property type="evidence" value="ECO:0000250"/>
    <property type="project" value="UniProtKB"/>
</dbReference>
<dbReference type="GO" id="GO:0006833">
    <property type="term" value="P:water transport"/>
    <property type="evidence" value="ECO:0000250"/>
    <property type="project" value="UniProtKB"/>
</dbReference>
<dbReference type="FunFam" id="1.20.1080.10:FF:000032">
    <property type="entry name" value="Aquaporin-2"/>
    <property type="match status" value="1"/>
</dbReference>
<dbReference type="Gene3D" id="1.20.1080.10">
    <property type="entry name" value="Glycerol uptake facilitator protein"/>
    <property type="match status" value="1"/>
</dbReference>
<dbReference type="InterPro" id="IPR023271">
    <property type="entry name" value="Aquaporin-like"/>
</dbReference>
<dbReference type="InterPro" id="IPR034294">
    <property type="entry name" value="Aquaporin_transptr"/>
</dbReference>
<dbReference type="InterPro" id="IPR000425">
    <property type="entry name" value="MIP"/>
</dbReference>
<dbReference type="InterPro" id="IPR022357">
    <property type="entry name" value="MIP_CS"/>
</dbReference>
<dbReference type="PANTHER" id="PTHR19139">
    <property type="entry name" value="AQUAPORIN TRANSPORTER"/>
    <property type="match status" value="1"/>
</dbReference>
<dbReference type="PANTHER" id="PTHR19139:SF45">
    <property type="entry name" value="AQUAPORIN-2"/>
    <property type="match status" value="1"/>
</dbReference>
<dbReference type="Pfam" id="PF00230">
    <property type="entry name" value="MIP"/>
    <property type="match status" value="1"/>
</dbReference>
<dbReference type="PRINTS" id="PR02014">
    <property type="entry name" value="AQUAPORIN2"/>
</dbReference>
<dbReference type="PRINTS" id="PR00783">
    <property type="entry name" value="MINTRINSICP"/>
</dbReference>
<dbReference type="SUPFAM" id="SSF81338">
    <property type="entry name" value="Aquaporin-like"/>
    <property type="match status" value="1"/>
</dbReference>
<dbReference type="PROSITE" id="PS00221">
    <property type="entry name" value="MIP"/>
    <property type="match status" value="1"/>
</dbReference>
<gene>
    <name evidence="2" type="primary">AQP2</name>
</gene>
<feature type="chain" id="PRO_0000063926" description="Aquaporin-2">
    <location>
        <begin position="1" status="less than"/>
        <end position="109" status="greater than"/>
    </location>
</feature>
<feature type="topological domain" description="Cytoplasmic" evidence="3">
    <location>
        <begin position="1" status="less than"/>
        <end position="6"/>
    </location>
</feature>
<feature type="transmembrane region" description="Helical" evidence="2">
    <location>
        <begin position="7"/>
        <end position="27"/>
    </location>
</feature>
<feature type="topological domain" description="Extracellular" evidence="3">
    <location>
        <begin position="28"/>
        <end position="35"/>
    </location>
</feature>
<feature type="transmembrane region" description="Helical" evidence="2">
    <location>
        <begin position="36"/>
        <end position="54"/>
    </location>
</feature>
<feature type="topological domain" description="Cytoplasmic" evidence="3">
    <location>
        <begin position="55"/>
        <end position="59"/>
    </location>
</feature>
<feature type="intramembrane region" description="Discontinuously helical" evidence="2">
    <location>
        <begin position="60"/>
        <end position="69"/>
    </location>
</feature>
<feature type="topological domain" description="Cytoplasmic" evidence="3">
    <location>
        <begin position="70"/>
        <end position="80"/>
    </location>
</feature>
<feature type="transmembrane region" description="Helical" evidence="2">
    <location>
        <begin position="81"/>
        <end position="102"/>
    </location>
</feature>
<feature type="topological domain" description="Extracellular" evidence="3">
    <location>
        <begin position="103"/>
        <end position="109" status="greater than"/>
    </location>
</feature>
<feature type="short sequence motif" description="NPA 1" evidence="2">
    <location>
        <begin position="63"/>
        <end position="65"/>
    </location>
</feature>
<feature type="non-terminal residue">
    <location>
        <position position="1"/>
    </location>
</feature>
<feature type="non-terminal residue">
    <location>
        <position position="109"/>
    </location>
</feature>
<evidence type="ECO:0000250" key="1">
    <source>
        <dbReference type="UniProtKB" id="P34080"/>
    </source>
</evidence>
<evidence type="ECO:0000250" key="2">
    <source>
        <dbReference type="UniProtKB" id="P41181"/>
    </source>
</evidence>
<evidence type="ECO:0000305" key="3"/>
<reference key="1">
    <citation type="journal article" date="1998" name="Mol. Phylogenet. Evol.">
        <title>Highly congruent molecular support for a diverse superordinal clade of endemic African mammals.</title>
        <authorList>
            <person name="Stanhope M.J."/>
            <person name="Madsen O.J."/>
            <person name="Waddell V.G."/>
            <person name="Cleven G.C."/>
            <person name="de Jong W.W."/>
            <person name="Springer M.S."/>
        </authorList>
    </citation>
    <scope>NUCLEOTIDE SEQUENCE [GENOMIC DNA]</scope>
</reference>
<accession>O77697</accession>